<protein>
    <recommendedName>
        <fullName evidence="1">Small ribosomal subunit protein uS7</fullName>
    </recommendedName>
    <alternativeName>
        <fullName evidence="2">30S ribosomal protein S7</fullName>
    </alternativeName>
</protein>
<name>RS7_SYMTH</name>
<accession>Q67JT9</accession>
<gene>
    <name evidence="1" type="primary">rpsG</name>
    <name type="ordered locus">STH3079</name>
</gene>
<comment type="function">
    <text evidence="1">One of the primary rRNA binding proteins, it binds directly to 16S rRNA where it nucleates assembly of the head domain of the 30S subunit. Is located at the subunit interface close to the decoding center, probably blocks exit of the E-site tRNA.</text>
</comment>
<comment type="subunit">
    <text evidence="1">Part of the 30S ribosomal subunit. Contacts proteins S9 and S11.</text>
</comment>
<comment type="similarity">
    <text evidence="1">Belongs to the universal ribosomal protein uS7 family.</text>
</comment>
<keyword id="KW-1185">Reference proteome</keyword>
<keyword id="KW-0687">Ribonucleoprotein</keyword>
<keyword id="KW-0689">Ribosomal protein</keyword>
<keyword id="KW-0694">RNA-binding</keyword>
<keyword id="KW-0699">rRNA-binding</keyword>
<keyword id="KW-0820">tRNA-binding</keyword>
<sequence>MPRRGHVPKREVQPDPVYNSELVTRVINKIMLDGKKALAQRIFYEAIDKASAKLGKEPMEVLEGALKNIMPVVETRSRRVGGATYQVPMEVRPERRQALGIRWLVQFARARGERTMVERLAAELVDAFNNTGGAVKKKEEVHRMAEANKPFAHYRW</sequence>
<dbReference type="EMBL" id="AP006840">
    <property type="protein sequence ID" value="BAD42061.1"/>
    <property type="molecule type" value="Genomic_DNA"/>
</dbReference>
<dbReference type="RefSeq" id="WP_011197194.1">
    <property type="nucleotide sequence ID" value="NC_006177.1"/>
</dbReference>
<dbReference type="SMR" id="Q67JT9"/>
<dbReference type="STRING" id="292459.STH3079"/>
<dbReference type="KEGG" id="sth:STH3079"/>
<dbReference type="eggNOG" id="COG0049">
    <property type="taxonomic scope" value="Bacteria"/>
</dbReference>
<dbReference type="HOGENOM" id="CLU_072226_1_1_9"/>
<dbReference type="OrthoDB" id="9807653at2"/>
<dbReference type="Proteomes" id="UP000000417">
    <property type="component" value="Chromosome"/>
</dbReference>
<dbReference type="GO" id="GO:0015935">
    <property type="term" value="C:small ribosomal subunit"/>
    <property type="evidence" value="ECO:0007669"/>
    <property type="project" value="InterPro"/>
</dbReference>
<dbReference type="GO" id="GO:0019843">
    <property type="term" value="F:rRNA binding"/>
    <property type="evidence" value="ECO:0007669"/>
    <property type="project" value="UniProtKB-UniRule"/>
</dbReference>
<dbReference type="GO" id="GO:0003735">
    <property type="term" value="F:structural constituent of ribosome"/>
    <property type="evidence" value="ECO:0007669"/>
    <property type="project" value="InterPro"/>
</dbReference>
<dbReference type="GO" id="GO:0000049">
    <property type="term" value="F:tRNA binding"/>
    <property type="evidence" value="ECO:0007669"/>
    <property type="project" value="UniProtKB-UniRule"/>
</dbReference>
<dbReference type="GO" id="GO:0006412">
    <property type="term" value="P:translation"/>
    <property type="evidence" value="ECO:0007669"/>
    <property type="project" value="UniProtKB-UniRule"/>
</dbReference>
<dbReference type="CDD" id="cd14869">
    <property type="entry name" value="uS7_Bacteria"/>
    <property type="match status" value="1"/>
</dbReference>
<dbReference type="FunFam" id="1.10.455.10:FF:000001">
    <property type="entry name" value="30S ribosomal protein S7"/>
    <property type="match status" value="1"/>
</dbReference>
<dbReference type="Gene3D" id="1.10.455.10">
    <property type="entry name" value="Ribosomal protein S7 domain"/>
    <property type="match status" value="1"/>
</dbReference>
<dbReference type="HAMAP" id="MF_00480_B">
    <property type="entry name" value="Ribosomal_uS7_B"/>
    <property type="match status" value="1"/>
</dbReference>
<dbReference type="InterPro" id="IPR000235">
    <property type="entry name" value="Ribosomal_uS7"/>
</dbReference>
<dbReference type="InterPro" id="IPR005717">
    <property type="entry name" value="Ribosomal_uS7_bac/org-type"/>
</dbReference>
<dbReference type="InterPro" id="IPR020606">
    <property type="entry name" value="Ribosomal_uS7_CS"/>
</dbReference>
<dbReference type="InterPro" id="IPR023798">
    <property type="entry name" value="Ribosomal_uS7_dom"/>
</dbReference>
<dbReference type="InterPro" id="IPR036823">
    <property type="entry name" value="Ribosomal_uS7_dom_sf"/>
</dbReference>
<dbReference type="NCBIfam" id="TIGR01029">
    <property type="entry name" value="rpsG_bact"/>
    <property type="match status" value="1"/>
</dbReference>
<dbReference type="PANTHER" id="PTHR11205">
    <property type="entry name" value="RIBOSOMAL PROTEIN S7"/>
    <property type="match status" value="1"/>
</dbReference>
<dbReference type="Pfam" id="PF00177">
    <property type="entry name" value="Ribosomal_S7"/>
    <property type="match status" value="1"/>
</dbReference>
<dbReference type="PIRSF" id="PIRSF002122">
    <property type="entry name" value="RPS7p_RPS7a_RPS5e_RPS7o"/>
    <property type="match status" value="1"/>
</dbReference>
<dbReference type="SUPFAM" id="SSF47973">
    <property type="entry name" value="Ribosomal protein S7"/>
    <property type="match status" value="1"/>
</dbReference>
<dbReference type="PROSITE" id="PS00052">
    <property type="entry name" value="RIBOSOMAL_S7"/>
    <property type="match status" value="1"/>
</dbReference>
<reference key="1">
    <citation type="journal article" date="2004" name="Nucleic Acids Res.">
        <title>Genome sequence of Symbiobacterium thermophilum, an uncultivable bacterium that depends on microbial commensalism.</title>
        <authorList>
            <person name="Ueda K."/>
            <person name="Yamashita A."/>
            <person name="Ishikawa J."/>
            <person name="Shimada M."/>
            <person name="Watsuji T."/>
            <person name="Morimura K."/>
            <person name="Ikeda H."/>
            <person name="Hattori M."/>
            <person name="Beppu T."/>
        </authorList>
    </citation>
    <scope>NUCLEOTIDE SEQUENCE [LARGE SCALE GENOMIC DNA]</scope>
    <source>
        <strain>DSM 24528 / JCM 14929 / IAM 14863 / T</strain>
    </source>
</reference>
<feature type="chain" id="PRO_0000124362" description="Small ribosomal subunit protein uS7">
    <location>
        <begin position="1"/>
        <end position="156"/>
    </location>
</feature>
<proteinExistence type="inferred from homology"/>
<evidence type="ECO:0000255" key="1">
    <source>
        <dbReference type="HAMAP-Rule" id="MF_00480"/>
    </source>
</evidence>
<evidence type="ECO:0000305" key="2"/>
<organism>
    <name type="scientific">Symbiobacterium thermophilum (strain DSM 24528 / JCM 14929 / IAM 14863 / T)</name>
    <dbReference type="NCBI Taxonomy" id="292459"/>
    <lineage>
        <taxon>Bacteria</taxon>
        <taxon>Bacillati</taxon>
        <taxon>Bacillota</taxon>
        <taxon>Clostridia</taxon>
        <taxon>Eubacteriales</taxon>
        <taxon>Symbiobacteriaceae</taxon>
        <taxon>Symbiobacterium</taxon>
    </lineage>
</organism>